<name>SSH2_MOUSE</name>
<proteinExistence type="evidence at protein level"/>
<dbReference type="EC" id="3.1.3.16"/>
<dbReference type="EC" id="3.1.3.48"/>
<dbReference type="EMBL" id="AB099288">
    <property type="protein sequence ID" value="BAC97811.1"/>
    <property type="molecule type" value="mRNA"/>
</dbReference>
<dbReference type="EMBL" id="AK155232">
    <property type="protein sequence ID" value="BAE33137.1"/>
    <property type="molecule type" value="mRNA"/>
</dbReference>
<dbReference type="EMBL" id="AK158449">
    <property type="protein sequence ID" value="BAE34514.1"/>
    <property type="molecule type" value="mRNA"/>
</dbReference>
<dbReference type="EMBL" id="AK170142">
    <property type="protein sequence ID" value="BAE41593.1"/>
    <property type="status" value="ALT_SEQ"/>
    <property type="molecule type" value="mRNA"/>
</dbReference>
<dbReference type="EMBL" id="AL606724">
    <property type="protein sequence ID" value="CAI24906.2"/>
    <property type="molecule type" value="Genomic_DNA"/>
</dbReference>
<dbReference type="EMBL" id="AL607072">
    <property type="protein sequence ID" value="CAI24906.2"/>
    <property type="status" value="JOINED"/>
    <property type="molecule type" value="Genomic_DNA"/>
</dbReference>
<dbReference type="EMBL" id="AL663066">
    <property type="protein sequence ID" value="CAI24906.2"/>
    <property type="status" value="JOINED"/>
    <property type="molecule type" value="Genomic_DNA"/>
</dbReference>
<dbReference type="EMBL" id="AL606724">
    <property type="protein sequence ID" value="CAI24907.1"/>
    <property type="status" value="ALT_SEQ"/>
    <property type="molecule type" value="Genomic_DNA"/>
</dbReference>
<dbReference type="EMBL" id="AL663066">
    <property type="protein sequence ID" value="CAI24907.1"/>
    <property type="status" value="JOINED"/>
    <property type="molecule type" value="Genomic_DNA"/>
</dbReference>
<dbReference type="EMBL" id="AL663066">
    <property type="protein sequence ID" value="CAI35939.2"/>
    <property type="molecule type" value="Genomic_DNA"/>
</dbReference>
<dbReference type="EMBL" id="AL606724">
    <property type="protein sequence ID" value="CAI35939.2"/>
    <property type="status" value="JOINED"/>
    <property type="molecule type" value="Genomic_DNA"/>
</dbReference>
<dbReference type="EMBL" id="AL607072">
    <property type="protein sequence ID" value="CAI35939.2"/>
    <property type="status" value="JOINED"/>
    <property type="molecule type" value="Genomic_DNA"/>
</dbReference>
<dbReference type="EMBL" id="AL663066">
    <property type="protein sequence ID" value="CAI35940.1"/>
    <property type="status" value="ALT_SEQ"/>
    <property type="molecule type" value="Genomic_DNA"/>
</dbReference>
<dbReference type="EMBL" id="AL606724">
    <property type="protein sequence ID" value="CAI35940.1"/>
    <property type="status" value="JOINED"/>
    <property type="molecule type" value="Genomic_DNA"/>
</dbReference>
<dbReference type="EMBL" id="AL606724">
    <property type="protein sequence ID" value="CAI51882.1"/>
    <property type="status" value="ALT_SEQ"/>
    <property type="molecule type" value="Genomic_DNA"/>
</dbReference>
<dbReference type="EMBL" id="AL607072">
    <property type="protein sequence ID" value="CAI52040.1"/>
    <property type="molecule type" value="Genomic_DNA"/>
</dbReference>
<dbReference type="EMBL" id="AL606724">
    <property type="protein sequence ID" value="CAI52040.1"/>
    <property type="status" value="JOINED"/>
    <property type="molecule type" value="Genomic_DNA"/>
</dbReference>
<dbReference type="EMBL" id="AL663066">
    <property type="protein sequence ID" value="CAI52040.1"/>
    <property type="status" value="JOINED"/>
    <property type="molecule type" value="Genomic_DNA"/>
</dbReference>
<dbReference type="EMBL" id="BC141392">
    <property type="protein sequence ID" value="AAI41393.1"/>
    <property type="molecule type" value="mRNA"/>
</dbReference>
<dbReference type="EMBL" id="BC141393">
    <property type="protein sequence ID" value="AAI41394.1"/>
    <property type="molecule type" value="mRNA"/>
</dbReference>
<dbReference type="EMBL" id="AK173243">
    <property type="protein sequence ID" value="BAD32521.1"/>
    <property type="molecule type" value="mRNA"/>
</dbReference>
<dbReference type="CCDS" id="CCDS25076.1">
    <molecule id="Q5SW75-1"/>
</dbReference>
<dbReference type="RefSeq" id="NP_001278119.1">
    <property type="nucleotide sequence ID" value="NM_001291190.1"/>
</dbReference>
<dbReference type="RefSeq" id="NP_808378.2">
    <molecule id="Q5SW75-1"/>
    <property type="nucleotide sequence ID" value="NM_177710.4"/>
</dbReference>
<dbReference type="RefSeq" id="XP_006533290.1">
    <molecule id="Q5SW75-4"/>
    <property type="nucleotide sequence ID" value="XM_006533227.5"/>
</dbReference>
<dbReference type="RefSeq" id="XP_006533292.1">
    <molecule id="Q5SW75-2"/>
    <property type="nucleotide sequence ID" value="XM_006533229.5"/>
</dbReference>
<dbReference type="SMR" id="Q5SW75"/>
<dbReference type="BioGRID" id="231916">
    <property type="interactions" value="2"/>
</dbReference>
<dbReference type="FunCoup" id="Q5SW75">
    <property type="interactions" value="1107"/>
</dbReference>
<dbReference type="IntAct" id="Q5SW75">
    <property type="interactions" value="1"/>
</dbReference>
<dbReference type="STRING" id="10090.ENSMUSP00000137933"/>
<dbReference type="GlyGen" id="Q5SW75">
    <property type="glycosylation" value="2 sites"/>
</dbReference>
<dbReference type="iPTMnet" id="Q5SW75"/>
<dbReference type="PhosphoSitePlus" id="Q5SW75"/>
<dbReference type="SwissPalm" id="Q5SW75"/>
<dbReference type="jPOST" id="Q5SW75"/>
<dbReference type="PaxDb" id="10090-ENSMUSP00000042625"/>
<dbReference type="PeptideAtlas" id="Q5SW75"/>
<dbReference type="ProteomicsDB" id="258739">
    <molecule id="Q5SW75-1"/>
</dbReference>
<dbReference type="ProteomicsDB" id="258740">
    <molecule id="Q5SW75-2"/>
</dbReference>
<dbReference type="ProteomicsDB" id="258741">
    <molecule id="Q5SW75-3"/>
</dbReference>
<dbReference type="ProteomicsDB" id="258742">
    <molecule id="Q5SW75-4"/>
</dbReference>
<dbReference type="Pumba" id="Q5SW75"/>
<dbReference type="Antibodypedia" id="26804">
    <property type="antibodies" value="55 antibodies from 20 providers"/>
</dbReference>
<dbReference type="DNASU" id="237860"/>
<dbReference type="Ensembl" id="ENSMUST00000037912.12">
    <molecule id="Q5SW75-1"/>
    <property type="protein sequence ID" value="ENSMUSP00000042625.6"/>
    <property type="gene ID" value="ENSMUSG00000037926.16"/>
</dbReference>
<dbReference type="GeneID" id="237860"/>
<dbReference type="KEGG" id="mmu:237860"/>
<dbReference type="UCSC" id="uc007kgl.2">
    <molecule id="Q5SW75-1"/>
    <property type="organism name" value="mouse"/>
</dbReference>
<dbReference type="UCSC" id="uc007kgo.2">
    <molecule id="Q5SW75-2"/>
    <property type="organism name" value="mouse"/>
</dbReference>
<dbReference type="AGR" id="MGI:2679255"/>
<dbReference type="CTD" id="85464"/>
<dbReference type="MGI" id="MGI:2679255">
    <property type="gene designation" value="Ssh2"/>
</dbReference>
<dbReference type="VEuPathDB" id="HostDB:ENSMUSG00000037926"/>
<dbReference type="eggNOG" id="KOG1716">
    <property type="taxonomic scope" value="Eukaryota"/>
</dbReference>
<dbReference type="GeneTree" id="ENSGT00940000157430"/>
<dbReference type="HOGENOM" id="CLU_006650_0_0_1"/>
<dbReference type="InParanoid" id="Q5SW75"/>
<dbReference type="OMA" id="EYTHTAT"/>
<dbReference type="OrthoDB" id="5779068at2759"/>
<dbReference type="PhylomeDB" id="Q5SW75"/>
<dbReference type="TreeFam" id="TF319444"/>
<dbReference type="BioGRID-ORCS" id="237860">
    <property type="hits" value="3 hits in 78 CRISPR screens"/>
</dbReference>
<dbReference type="ChiTaRS" id="Ssh2">
    <property type="organism name" value="mouse"/>
</dbReference>
<dbReference type="PRO" id="PR:Q5SW75"/>
<dbReference type="Proteomes" id="UP000000589">
    <property type="component" value="Chromosome 11"/>
</dbReference>
<dbReference type="RNAct" id="Q5SW75">
    <property type="molecule type" value="protein"/>
</dbReference>
<dbReference type="Bgee" id="ENSMUSG00000037926">
    <property type="expression patterns" value="Expressed in spermatocyte and 225 other cell types or tissues"/>
</dbReference>
<dbReference type="ExpressionAtlas" id="Q5SW75">
    <property type="expression patterns" value="baseline and differential"/>
</dbReference>
<dbReference type="GO" id="GO:0001669">
    <property type="term" value="C:acrosomal vesicle"/>
    <property type="evidence" value="ECO:0007669"/>
    <property type="project" value="UniProtKB-SubCell"/>
</dbReference>
<dbReference type="GO" id="GO:0005856">
    <property type="term" value="C:cytoskeleton"/>
    <property type="evidence" value="ECO:0007669"/>
    <property type="project" value="UniProtKB-SubCell"/>
</dbReference>
<dbReference type="GO" id="GO:0005925">
    <property type="term" value="C:focal adhesion"/>
    <property type="evidence" value="ECO:0007669"/>
    <property type="project" value="UniProtKB-SubCell"/>
</dbReference>
<dbReference type="GO" id="GO:0003779">
    <property type="term" value="F:actin binding"/>
    <property type="evidence" value="ECO:0007669"/>
    <property type="project" value="UniProtKB-KW"/>
</dbReference>
<dbReference type="GO" id="GO:0004722">
    <property type="term" value="F:protein serine/threonine phosphatase activity"/>
    <property type="evidence" value="ECO:0007669"/>
    <property type="project" value="UniProtKB-EC"/>
</dbReference>
<dbReference type="GO" id="GO:0004725">
    <property type="term" value="F:protein tyrosine phosphatase activity"/>
    <property type="evidence" value="ECO:0007669"/>
    <property type="project" value="UniProtKB-EC"/>
</dbReference>
<dbReference type="GO" id="GO:0030154">
    <property type="term" value="P:cell differentiation"/>
    <property type="evidence" value="ECO:0007669"/>
    <property type="project" value="UniProtKB-KW"/>
</dbReference>
<dbReference type="GO" id="GO:0030837">
    <property type="term" value="P:negative regulation of actin filament polymerization"/>
    <property type="evidence" value="ECO:0007669"/>
    <property type="project" value="InterPro"/>
</dbReference>
<dbReference type="GO" id="GO:0007283">
    <property type="term" value="P:spermatogenesis"/>
    <property type="evidence" value="ECO:0007669"/>
    <property type="project" value="UniProtKB-KW"/>
</dbReference>
<dbReference type="CDD" id="cd14569">
    <property type="entry name" value="DSP_slingshot_2"/>
    <property type="match status" value="1"/>
</dbReference>
<dbReference type="CDD" id="cd11652">
    <property type="entry name" value="SSH-N"/>
    <property type="match status" value="1"/>
</dbReference>
<dbReference type="FunFam" id="3.90.190.10:FF:000004">
    <property type="entry name" value="Protein phosphatase Slingshot homolog 2"/>
    <property type="match status" value="1"/>
</dbReference>
<dbReference type="Gene3D" id="3.90.190.10">
    <property type="entry name" value="Protein tyrosine phosphatase superfamily"/>
    <property type="match status" value="1"/>
</dbReference>
<dbReference type="InterPro" id="IPR014876">
    <property type="entry name" value="DEK_C"/>
</dbReference>
<dbReference type="InterPro" id="IPR000340">
    <property type="entry name" value="Dual-sp_phosphatase_cat-dom"/>
</dbReference>
<dbReference type="InterPro" id="IPR043587">
    <property type="entry name" value="Phosphatase_SSH-like"/>
</dbReference>
<dbReference type="InterPro" id="IPR029021">
    <property type="entry name" value="Prot-tyrosine_phosphatase-like"/>
</dbReference>
<dbReference type="InterPro" id="IPR043588">
    <property type="entry name" value="SSH-N"/>
</dbReference>
<dbReference type="InterPro" id="IPR016130">
    <property type="entry name" value="Tyr_Pase_AS"/>
</dbReference>
<dbReference type="InterPro" id="IPR000387">
    <property type="entry name" value="Tyr_Pase_dom"/>
</dbReference>
<dbReference type="InterPro" id="IPR020422">
    <property type="entry name" value="TYR_PHOSPHATASE_DUAL_dom"/>
</dbReference>
<dbReference type="PANTHER" id="PTHR45864:SF3">
    <property type="entry name" value="PROTEIN PHOSPHATASE SLINGSHOT HOMOLOG 2"/>
    <property type="match status" value="1"/>
</dbReference>
<dbReference type="PANTHER" id="PTHR45864">
    <property type="entry name" value="SLINGSHOT PROTEIN PHOSPHATASE HOMOLOG"/>
    <property type="match status" value="1"/>
</dbReference>
<dbReference type="Pfam" id="PF08766">
    <property type="entry name" value="DEK_C"/>
    <property type="match status" value="1"/>
</dbReference>
<dbReference type="Pfam" id="PF00782">
    <property type="entry name" value="DSPc"/>
    <property type="match status" value="1"/>
</dbReference>
<dbReference type="Pfam" id="PF23040">
    <property type="entry name" value="PH_SSH1-like_1st"/>
    <property type="match status" value="1"/>
</dbReference>
<dbReference type="SMART" id="SM00195">
    <property type="entry name" value="DSPc"/>
    <property type="match status" value="1"/>
</dbReference>
<dbReference type="SUPFAM" id="SSF52799">
    <property type="entry name" value="(Phosphotyrosine protein) phosphatases II"/>
    <property type="match status" value="1"/>
</dbReference>
<dbReference type="PROSITE" id="PS51998">
    <property type="entry name" value="DEK_C"/>
    <property type="match status" value="1"/>
</dbReference>
<dbReference type="PROSITE" id="PS00383">
    <property type="entry name" value="TYR_PHOSPHATASE_1"/>
    <property type="match status" value="1"/>
</dbReference>
<dbReference type="PROSITE" id="PS50056">
    <property type="entry name" value="TYR_PHOSPHATASE_2"/>
    <property type="match status" value="1"/>
</dbReference>
<dbReference type="PROSITE" id="PS50054">
    <property type="entry name" value="TYR_PHOSPHATASE_DUAL"/>
    <property type="match status" value="1"/>
</dbReference>
<reference key="1">
    <citation type="journal article" date="2003" name="Genes Cells">
        <title>Differential activities, subcellular distribution and tissue expression patterns of three members of Slingshot family phosphatases that dephosphorylate cofilin.</title>
        <authorList>
            <person name="Ohta Y."/>
            <person name="Kousaka K."/>
            <person name="Nagata-Ohashi K."/>
            <person name="Ohashi K."/>
            <person name="Muramoto A."/>
            <person name="Shima Y."/>
            <person name="Niwa R."/>
            <person name="Uemura T."/>
            <person name="Mizuno K."/>
        </authorList>
    </citation>
    <scope>NUCLEOTIDE SEQUENCE [MRNA] (ISOFORM 1)</scope>
    <scope>FUNCTION</scope>
    <scope>INTERACTION WITH ACTIN</scope>
    <scope>SUBCELLULAR LOCATION</scope>
    <scope>TISSUE SPECIFICITY</scope>
    <scope>DEVELOPMENTAL STAGE</scope>
    <scope>MUTAGENESIS OF CYS-392</scope>
    <source>
        <tissue>Kidney</tissue>
    </source>
</reference>
<reference key="2">
    <citation type="journal article" date="2005" name="Science">
        <title>The transcriptional landscape of the mammalian genome.</title>
        <authorList>
            <person name="Carninci P."/>
            <person name="Kasukawa T."/>
            <person name="Katayama S."/>
            <person name="Gough J."/>
            <person name="Frith M.C."/>
            <person name="Maeda N."/>
            <person name="Oyama R."/>
            <person name="Ravasi T."/>
            <person name="Lenhard B."/>
            <person name="Wells C."/>
            <person name="Kodzius R."/>
            <person name="Shimokawa K."/>
            <person name="Bajic V.B."/>
            <person name="Brenner S.E."/>
            <person name="Batalov S."/>
            <person name="Forrest A.R."/>
            <person name="Zavolan M."/>
            <person name="Davis M.J."/>
            <person name="Wilming L.G."/>
            <person name="Aidinis V."/>
            <person name="Allen J.E."/>
            <person name="Ambesi-Impiombato A."/>
            <person name="Apweiler R."/>
            <person name="Aturaliya R.N."/>
            <person name="Bailey T.L."/>
            <person name="Bansal M."/>
            <person name="Baxter L."/>
            <person name="Beisel K.W."/>
            <person name="Bersano T."/>
            <person name="Bono H."/>
            <person name="Chalk A.M."/>
            <person name="Chiu K.P."/>
            <person name="Choudhary V."/>
            <person name="Christoffels A."/>
            <person name="Clutterbuck D.R."/>
            <person name="Crowe M.L."/>
            <person name="Dalla E."/>
            <person name="Dalrymple B.P."/>
            <person name="de Bono B."/>
            <person name="Della Gatta G."/>
            <person name="di Bernardo D."/>
            <person name="Down T."/>
            <person name="Engstrom P."/>
            <person name="Fagiolini M."/>
            <person name="Faulkner G."/>
            <person name="Fletcher C.F."/>
            <person name="Fukushima T."/>
            <person name="Furuno M."/>
            <person name="Futaki S."/>
            <person name="Gariboldi M."/>
            <person name="Georgii-Hemming P."/>
            <person name="Gingeras T.R."/>
            <person name="Gojobori T."/>
            <person name="Green R.E."/>
            <person name="Gustincich S."/>
            <person name="Harbers M."/>
            <person name="Hayashi Y."/>
            <person name="Hensch T.K."/>
            <person name="Hirokawa N."/>
            <person name="Hill D."/>
            <person name="Huminiecki L."/>
            <person name="Iacono M."/>
            <person name="Ikeo K."/>
            <person name="Iwama A."/>
            <person name="Ishikawa T."/>
            <person name="Jakt M."/>
            <person name="Kanapin A."/>
            <person name="Katoh M."/>
            <person name="Kawasawa Y."/>
            <person name="Kelso J."/>
            <person name="Kitamura H."/>
            <person name="Kitano H."/>
            <person name="Kollias G."/>
            <person name="Krishnan S.P."/>
            <person name="Kruger A."/>
            <person name="Kummerfeld S.K."/>
            <person name="Kurochkin I.V."/>
            <person name="Lareau L.F."/>
            <person name="Lazarevic D."/>
            <person name="Lipovich L."/>
            <person name="Liu J."/>
            <person name="Liuni S."/>
            <person name="McWilliam S."/>
            <person name="Madan Babu M."/>
            <person name="Madera M."/>
            <person name="Marchionni L."/>
            <person name="Matsuda H."/>
            <person name="Matsuzawa S."/>
            <person name="Miki H."/>
            <person name="Mignone F."/>
            <person name="Miyake S."/>
            <person name="Morris K."/>
            <person name="Mottagui-Tabar S."/>
            <person name="Mulder N."/>
            <person name="Nakano N."/>
            <person name="Nakauchi H."/>
            <person name="Ng P."/>
            <person name="Nilsson R."/>
            <person name="Nishiguchi S."/>
            <person name="Nishikawa S."/>
            <person name="Nori F."/>
            <person name="Ohara O."/>
            <person name="Okazaki Y."/>
            <person name="Orlando V."/>
            <person name="Pang K.C."/>
            <person name="Pavan W.J."/>
            <person name="Pavesi G."/>
            <person name="Pesole G."/>
            <person name="Petrovsky N."/>
            <person name="Piazza S."/>
            <person name="Reed J."/>
            <person name="Reid J.F."/>
            <person name="Ring B.Z."/>
            <person name="Ringwald M."/>
            <person name="Rost B."/>
            <person name="Ruan Y."/>
            <person name="Salzberg S.L."/>
            <person name="Sandelin A."/>
            <person name="Schneider C."/>
            <person name="Schoenbach C."/>
            <person name="Sekiguchi K."/>
            <person name="Semple C.A."/>
            <person name="Seno S."/>
            <person name="Sessa L."/>
            <person name="Sheng Y."/>
            <person name="Shibata Y."/>
            <person name="Shimada H."/>
            <person name="Shimada K."/>
            <person name="Silva D."/>
            <person name="Sinclair B."/>
            <person name="Sperling S."/>
            <person name="Stupka E."/>
            <person name="Sugiura K."/>
            <person name="Sultana R."/>
            <person name="Takenaka Y."/>
            <person name="Taki K."/>
            <person name="Tammoja K."/>
            <person name="Tan S.L."/>
            <person name="Tang S."/>
            <person name="Taylor M.S."/>
            <person name="Tegner J."/>
            <person name="Teichmann S.A."/>
            <person name="Ueda H.R."/>
            <person name="van Nimwegen E."/>
            <person name="Verardo R."/>
            <person name="Wei C.L."/>
            <person name="Yagi K."/>
            <person name="Yamanishi H."/>
            <person name="Zabarovsky E."/>
            <person name="Zhu S."/>
            <person name="Zimmer A."/>
            <person name="Hide W."/>
            <person name="Bult C."/>
            <person name="Grimmond S.M."/>
            <person name="Teasdale R.D."/>
            <person name="Liu E.T."/>
            <person name="Brusic V."/>
            <person name="Quackenbush J."/>
            <person name="Wahlestedt C."/>
            <person name="Mattick J.S."/>
            <person name="Hume D.A."/>
            <person name="Kai C."/>
            <person name="Sasaki D."/>
            <person name="Tomaru Y."/>
            <person name="Fukuda S."/>
            <person name="Kanamori-Katayama M."/>
            <person name="Suzuki M."/>
            <person name="Aoki J."/>
            <person name="Arakawa T."/>
            <person name="Iida J."/>
            <person name="Imamura K."/>
            <person name="Itoh M."/>
            <person name="Kato T."/>
            <person name="Kawaji H."/>
            <person name="Kawagashira N."/>
            <person name="Kawashima T."/>
            <person name="Kojima M."/>
            <person name="Kondo S."/>
            <person name="Konno H."/>
            <person name="Nakano K."/>
            <person name="Ninomiya N."/>
            <person name="Nishio T."/>
            <person name="Okada M."/>
            <person name="Plessy C."/>
            <person name="Shibata K."/>
            <person name="Shiraki T."/>
            <person name="Suzuki S."/>
            <person name="Tagami M."/>
            <person name="Waki K."/>
            <person name="Watahiki A."/>
            <person name="Okamura-Oho Y."/>
            <person name="Suzuki H."/>
            <person name="Kawai J."/>
            <person name="Hayashizaki Y."/>
        </authorList>
    </citation>
    <scope>NUCLEOTIDE SEQUENCE [LARGE SCALE MRNA] (ISOFORMS 2 AND 3)</scope>
    <source>
        <strain>NOD</strain>
    </source>
</reference>
<reference key="3">
    <citation type="journal article" date="2009" name="PLoS Biol.">
        <title>Lineage-specific biology revealed by a finished genome assembly of the mouse.</title>
        <authorList>
            <person name="Church D.M."/>
            <person name="Goodstadt L."/>
            <person name="Hillier L.W."/>
            <person name="Zody M.C."/>
            <person name="Goldstein S."/>
            <person name="She X."/>
            <person name="Bult C.J."/>
            <person name="Agarwala R."/>
            <person name="Cherry J.L."/>
            <person name="DiCuccio M."/>
            <person name="Hlavina W."/>
            <person name="Kapustin Y."/>
            <person name="Meric P."/>
            <person name="Maglott D."/>
            <person name="Birtle Z."/>
            <person name="Marques A.C."/>
            <person name="Graves T."/>
            <person name="Zhou S."/>
            <person name="Teague B."/>
            <person name="Potamousis K."/>
            <person name="Churas C."/>
            <person name="Place M."/>
            <person name="Herschleb J."/>
            <person name="Runnheim R."/>
            <person name="Forrest D."/>
            <person name="Amos-Landgraf J."/>
            <person name="Schwartz D.C."/>
            <person name="Cheng Z."/>
            <person name="Lindblad-Toh K."/>
            <person name="Eichler E.E."/>
            <person name="Ponting C.P."/>
        </authorList>
    </citation>
    <scope>NUCLEOTIDE SEQUENCE [LARGE SCALE GENOMIC DNA]</scope>
    <source>
        <strain>C57BL/6J</strain>
    </source>
</reference>
<reference key="4">
    <citation type="journal article" date="2004" name="Genome Res.">
        <title>The status, quality, and expansion of the NIH full-length cDNA project: the Mammalian Gene Collection (MGC).</title>
        <authorList>
            <consortium name="The MGC Project Team"/>
        </authorList>
    </citation>
    <scope>NUCLEOTIDE SEQUENCE [LARGE SCALE MRNA] (ISOFORM 1)</scope>
    <source>
        <tissue>Brain</tissue>
    </source>
</reference>
<reference key="5">
    <citation type="journal article" date="2004" name="DNA Res.">
        <title>Prediction of the coding sequences of mouse homologues of KIAA gene: IV. The complete nucleotide sequences of 500 mouse KIAA-homologous cDNAs identified by screening of terminal sequences of cDNA clones randomly sampled from size-fractionated libraries.</title>
        <authorList>
            <person name="Okazaki N."/>
            <person name="Kikuno R."/>
            <person name="Ohara R."/>
            <person name="Inamoto S."/>
            <person name="Koseki H."/>
            <person name="Hiraoka S."/>
            <person name="Saga Y."/>
            <person name="Seino S."/>
            <person name="Nishimura M."/>
            <person name="Kaisho T."/>
            <person name="Hoshino K."/>
            <person name="Kitamura H."/>
            <person name="Nagase T."/>
            <person name="Ohara O."/>
            <person name="Koga H."/>
        </authorList>
    </citation>
    <scope>NUCLEOTIDE SEQUENCE [LARGE SCALE MRNA] OF 371-1423 (ISOFORMS 1/2)</scope>
    <source>
        <tissue>Brain</tissue>
    </source>
</reference>
<reference key="6">
    <citation type="journal article" date="2004" name="Mol. Cell. Proteomics">
        <title>Phosphoproteomic analysis of the developing mouse brain.</title>
        <authorList>
            <person name="Ballif B.A."/>
            <person name="Villen J."/>
            <person name="Beausoleil S.A."/>
            <person name="Schwartz D."/>
            <person name="Gygi S.P."/>
        </authorList>
    </citation>
    <scope>IDENTIFICATION BY MASS SPECTROMETRY [LARGE SCALE ANALYSIS]</scope>
    <source>
        <tissue>Embryonic brain</tissue>
    </source>
</reference>
<reference key="7">
    <citation type="journal article" date="2010" name="Cell">
        <title>A tissue-specific atlas of mouse protein phosphorylation and expression.</title>
        <authorList>
            <person name="Huttlin E.L."/>
            <person name="Jedrychowski M.P."/>
            <person name="Elias J.E."/>
            <person name="Goswami T."/>
            <person name="Rad R."/>
            <person name="Beausoleil S.A."/>
            <person name="Villen J."/>
            <person name="Haas W."/>
            <person name="Sowa M.E."/>
            <person name="Gygi S.P."/>
        </authorList>
    </citation>
    <scope>PHOSPHORYLATION [LARGE SCALE ANALYSIS] AT SER-17; SER-25; SER-461; SER-487; SER-534; SER-631; SER-633 AND THR-1422</scope>
    <scope>IDENTIFICATION BY MASS SPECTROMETRY [LARGE SCALE ANALYSIS]</scope>
    <source>
        <tissue>Brain</tissue>
        <tissue>Brown adipose tissue</tissue>
        <tissue>Heart</tissue>
        <tissue>Kidney</tissue>
        <tissue>Lung</tissue>
        <tissue>Spleen</tissue>
        <tissue>Testis</tissue>
    </source>
</reference>
<reference key="8">
    <citation type="journal article" date="2023" name="Elife">
        <title>The slingshot phosphatase 2 is required for acrosome biogenesis during spermatogenesis in mice.</title>
        <authorList>
            <person name="Xu K."/>
            <person name="Su X."/>
            <person name="Fang K."/>
            <person name="Lv Y."/>
            <person name="Huang T."/>
            <person name="Li M."/>
            <person name="Wang Z."/>
            <person name="Yin Y."/>
            <person name="Muhammad T."/>
            <person name="Liu S."/>
            <person name="Chen X."/>
            <person name="Jiang J."/>
            <person name="Li J."/>
            <person name="Chan W.Y."/>
            <person name="Ma J."/>
            <person name="Lu G."/>
            <person name="Chen Z.J."/>
            <person name="Liu H."/>
        </authorList>
    </citation>
    <scope>FUNCTION</scope>
    <scope>SUBCELLULAR LOCATION</scope>
    <scope>TISSUE SPECIFICITY</scope>
    <scope>DEVELOPMENTAL STAGE</scope>
    <scope>DISRUPTION PHENOTYPE</scope>
</reference>
<evidence type="ECO:0000250" key="1">
    <source>
        <dbReference type="UniProtKB" id="Q76I76"/>
    </source>
</evidence>
<evidence type="ECO:0000255" key="2">
    <source>
        <dbReference type="PROSITE-ProRule" id="PRU00160"/>
    </source>
</evidence>
<evidence type="ECO:0000255" key="3">
    <source>
        <dbReference type="PROSITE-ProRule" id="PRU01342"/>
    </source>
</evidence>
<evidence type="ECO:0000255" key="4">
    <source>
        <dbReference type="PROSITE-ProRule" id="PRU10044"/>
    </source>
</evidence>
<evidence type="ECO:0000256" key="5">
    <source>
        <dbReference type="SAM" id="MobiDB-lite"/>
    </source>
</evidence>
<evidence type="ECO:0000269" key="6">
    <source>
    </source>
</evidence>
<evidence type="ECO:0000269" key="7">
    <source>
    </source>
</evidence>
<evidence type="ECO:0000303" key="8">
    <source>
    </source>
</evidence>
<evidence type="ECO:0000305" key="9"/>
<evidence type="ECO:0007744" key="10">
    <source>
    </source>
</evidence>
<gene>
    <name type="primary">Ssh2</name>
    <name type="synonym">Kiaa1725</name>
    <name type="synonym">Ssh2l</name>
</gene>
<comment type="function">
    <text evidence="6 7">Protein phosphatase which regulates actin filament dynamics. Dephosphorylates and activates the actin binding/depolymerizing factor cofilin, which subsequently binds to actin filaments and stimulates their disassembly. Inhibitory phosphorylation of cofilin is mediated by LIMK1, which may also be dephosphorylated and inactivated by this protein (PubMed:14531860). Required for spermatogenesis (PubMed:36942942). Involved in acrosome biogenesis, probably by regulating cofilin-mediated actin cytoskeleton remodeling during proacrosomal vesicle fusion and/or Golgi to perinuclear vesicle trafficking (PubMed:36942942).</text>
</comment>
<comment type="catalytic activity">
    <reaction evidence="4">
        <text>O-phospho-L-tyrosyl-[protein] + H2O = L-tyrosyl-[protein] + phosphate</text>
        <dbReference type="Rhea" id="RHEA:10684"/>
        <dbReference type="Rhea" id="RHEA-COMP:10136"/>
        <dbReference type="Rhea" id="RHEA-COMP:20101"/>
        <dbReference type="ChEBI" id="CHEBI:15377"/>
        <dbReference type="ChEBI" id="CHEBI:43474"/>
        <dbReference type="ChEBI" id="CHEBI:46858"/>
        <dbReference type="ChEBI" id="CHEBI:61978"/>
        <dbReference type="EC" id="3.1.3.48"/>
    </reaction>
</comment>
<comment type="catalytic activity">
    <reaction>
        <text>O-phospho-L-seryl-[protein] + H2O = L-seryl-[protein] + phosphate</text>
        <dbReference type="Rhea" id="RHEA:20629"/>
        <dbReference type="Rhea" id="RHEA-COMP:9863"/>
        <dbReference type="Rhea" id="RHEA-COMP:11604"/>
        <dbReference type="ChEBI" id="CHEBI:15377"/>
        <dbReference type="ChEBI" id="CHEBI:29999"/>
        <dbReference type="ChEBI" id="CHEBI:43474"/>
        <dbReference type="ChEBI" id="CHEBI:83421"/>
        <dbReference type="EC" id="3.1.3.16"/>
    </reaction>
</comment>
<comment type="catalytic activity">
    <reaction>
        <text>O-phospho-L-threonyl-[protein] + H2O = L-threonyl-[protein] + phosphate</text>
        <dbReference type="Rhea" id="RHEA:47004"/>
        <dbReference type="Rhea" id="RHEA-COMP:11060"/>
        <dbReference type="Rhea" id="RHEA-COMP:11605"/>
        <dbReference type="ChEBI" id="CHEBI:15377"/>
        <dbReference type="ChEBI" id="CHEBI:30013"/>
        <dbReference type="ChEBI" id="CHEBI:43474"/>
        <dbReference type="ChEBI" id="CHEBI:61977"/>
        <dbReference type="EC" id="3.1.3.16"/>
    </reaction>
</comment>
<comment type="subunit">
    <text evidence="6">Interacts with filamentous actin.</text>
</comment>
<comment type="subcellular location">
    <subcellularLocation>
        <location evidence="7">Cytoplasm</location>
    </subcellularLocation>
    <subcellularLocation>
        <location evidence="6">Cytoplasm</location>
        <location evidence="6">Cytoskeleton</location>
    </subcellularLocation>
    <subcellularLocation>
        <location evidence="6">Cell junction</location>
        <location evidence="6">Focal adhesion</location>
    </subcellularLocation>
    <subcellularLocation>
        <location evidence="7">Cytoplasmic vesicle</location>
        <location evidence="7">Secretory vesicle</location>
        <location evidence="7">Acrosome</location>
    </subcellularLocation>
    <text evidence="6">Colocalizes with filamentous actin in the cytoplasm and the cell periphery.</text>
</comment>
<comment type="alternative products">
    <event type="alternative splicing"/>
    <isoform>
        <id>Q5SW75-1</id>
        <name>1</name>
        <sequence type="displayed"/>
    </isoform>
    <isoform>
        <id>Q5SW75-2</id>
        <name>2</name>
        <sequence type="described" ref="VSP_016326"/>
    </isoform>
    <isoform>
        <id>Q5SW75-3</id>
        <name>3</name>
        <sequence type="described" ref="VSP_016326 VSP_016328 VSP_016329"/>
    </isoform>
    <isoform>
        <id>Q5SW75-4</id>
        <name>4</name>
        <sequence type="described" ref="VSP_016327"/>
    </isoform>
</comment>
<comment type="tissue specificity">
    <text evidence="6 7">Expressed in brain, heart, liver, skeletal muscle, testis and thymus. Also expressed at lower levels in kidney, small intestine and spleen (PubMed:14531860). Within testicular seminiferous tubules expressed in germ cells and spermatocytes, where it has a cytoplasmic localization, and round spermatids, where it concentrates in the acrosomal region next to the nucleus (PubMed:36942942).</text>
</comment>
<comment type="developmental stage">
    <text evidence="6 7">Expressed in the nervous system at 14.5 dpc (PubMed:14531860). Undetectable in testes at 7 days after birth (PubMed:36942942). Gradually increased expression between 14 and 35 days after birth followed by slightly decreased expression by 56 days after birth (at protein level) (PubMed:36942942).</text>
</comment>
<comment type="disruption phenotype">
    <text evidence="7">Complete male infertility but no effect on body weight or testis weight and size (PubMed:36942942). Impaired spermatogenesis devoid of spermatid elongation (arrested at stage II-III), resulting in accumulation of round spermatids with malformed acrosomal structures (PubMed:36942942). Spermatids and germ cells show increased levels of apoptosis via BCL2-caspase-3 pathway (PubMed:36942942). Actin cytoskeleton disorganization and actin filament aggregation in spermatids and germ cells, along with increased levels of cofilin phosphorylation (PubMed:36942942).</text>
</comment>
<comment type="miscellaneous">
    <text>Tyrosine phosphatase activity has not been demonstrated for this protein to date.</text>
</comment>
<comment type="similarity">
    <text evidence="9">Belongs to the protein-tyrosine phosphatase family.</text>
</comment>
<comment type="sequence caution" evidence="9">
    <conflict type="miscellaneous discrepancy">
        <sequence resource="EMBL-CDS" id="BAE41593"/>
    </conflict>
    <text>Intron retention.</text>
</comment>
<comment type="sequence caution" evidence="9">
    <conflict type="erroneous gene model prediction">
        <sequence resource="EMBL-CDS" id="CAI24907"/>
    </conflict>
</comment>
<comment type="sequence caution" evidence="9">
    <conflict type="erroneous gene model prediction">
        <sequence resource="EMBL-CDS" id="CAI35940"/>
    </conflict>
</comment>
<comment type="sequence caution" evidence="9">
    <conflict type="erroneous gene model prediction">
        <sequence resource="EMBL-CDS" id="CAI51882"/>
    </conflict>
</comment>
<feature type="chain" id="PRO_0000094844" description="Protein phosphatase Slingshot homolog 2">
    <location>
        <begin position="1"/>
        <end position="1423"/>
    </location>
</feature>
<feature type="domain" description="DEK-C" evidence="3">
    <location>
        <begin position="248"/>
        <end position="303"/>
    </location>
</feature>
<feature type="domain" description="Tyrosine-protein phosphatase" evidence="2">
    <location>
        <begin position="307"/>
        <end position="448"/>
    </location>
</feature>
<feature type="region of interest" description="Disordered" evidence="5">
    <location>
        <begin position="1"/>
        <end position="37"/>
    </location>
</feature>
<feature type="region of interest" description="Disordered" evidence="5">
    <location>
        <begin position="51"/>
        <end position="70"/>
    </location>
</feature>
<feature type="region of interest" description="Disordered" evidence="5">
    <location>
        <begin position="698"/>
        <end position="725"/>
    </location>
</feature>
<feature type="region of interest" description="Disordered" evidence="5">
    <location>
        <begin position="833"/>
        <end position="858"/>
    </location>
</feature>
<feature type="region of interest" description="Disordered" evidence="5">
    <location>
        <begin position="878"/>
        <end position="950"/>
    </location>
</feature>
<feature type="region of interest" description="Disordered" evidence="5">
    <location>
        <begin position="967"/>
        <end position="991"/>
    </location>
</feature>
<feature type="region of interest" description="Disordered" evidence="5">
    <location>
        <begin position="1021"/>
        <end position="1042"/>
    </location>
</feature>
<feature type="region of interest" description="Disordered" evidence="5">
    <location>
        <begin position="1074"/>
        <end position="1105"/>
    </location>
</feature>
<feature type="region of interest" description="Disordered" evidence="5">
    <location>
        <begin position="1207"/>
        <end position="1226"/>
    </location>
</feature>
<feature type="compositionally biased region" description="Low complexity" evidence="5">
    <location>
        <begin position="9"/>
        <end position="18"/>
    </location>
</feature>
<feature type="compositionally biased region" description="Polar residues" evidence="5">
    <location>
        <begin position="884"/>
        <end position="904"/>
    </location>
</feature>
<feature type="compositionally biased region" description="Basic and acidic residues" evidence="5">
    <location>
        <begin position="910"/>
        <end position="932"/>
    </location>
</feature>
<feature type="compositionally biased region" description="Basic and acidic residues" evidence="5">
    <location>
        <begin position="976"/>
        <end position="987"/>
    </location>
</feature>
<feature type="compositionally biased region" description="Basic and acidic residues" evidence="5">
    <location>
        <begin position="1033"/>
        <end position="1042"/>
    </location>
</feature>
<feature type="active site" description="Phosphocysteine intermediate" evidence="2">
    <location>
        <position position="392"/>
    </location>
</feature>
<feature type="modified residue" description="Phosphoserine" evidence="10">
    <location>
        <position position="17"/>
    </location>
</feature>
<feature type="modified residue" description="Phosphoserine" evidence="10">
    <location>
        <position position="25"/>
    </location>
</feature>
<feature type="modified residue" description="Phosphoserine" evidence="1">
    <location>
        <position position="36"/>
    </location>
</feature>
<feature type="modified residue" description="Phosphoserine" evidence="10">
    <location>
        <position position="461"/>
    </location>
</feature>
<feature type="modified residue" description="Phosphoserine" evidence="10">
    <location>
        <position position="487"/>
    </location>
</feature>
<feature type="modified residue" description="Phosphoserine" evidence="10">
    <location>
        <position position="534"/>
    </location>
</feature>
<feature type="modified residue" description="Phosphoserine" evidence="10">
    <location>
        <position position="631"/>
    </location>
</feature>
<feature type="modified residue" description="Phosphoserine" evidence="10">
    <location>
        <position position="633"/>
    </location>
</feature>
<feature type="modified residue" description="Phosphoserine" evidence="1">
    <location>
        <position position="1217"/>
    </location>
</feature>
<feature type="modified residue" description="Phosphothreonine" evidence="10">
    <location>
        <position position="1422"/>
    </location>
</feature>
<feature type="splice variant" id="VSP_016326" description="In isoform 2 and isoform 3." evidence="8">
    <original>MALVTVQRSPTPSTTSSPCASEADSGEEECRSQPRS</original>
    <variation>MTLSTLAGERKALPASTCSLGGPDMIPYFSANAVISQNAINQL</variation>
    <location>
        <begin position="1"/>
        <end position="36"/>
    </location>
</feature>
<feature type="splice variant" id="VSP_016327" description="In isoform 4." evidence="9">
    <original>S</original>
    <variation>SSSYLEDSESAALLCCEYGESEIFSDFN</variation>
    <location>
        <position position="21"/>
    </location>
</feature>
<feature type="splice variant" id="VSP_016328" description="In isoform 3." evidence="8">
    <original>S</original>
    <variation>R</variation>
    <location>
        <position position="133"/>
    </location>
</feature>
<feature type="splice variant" id="VSP_016329" description="In isoform 3." evidence="8">
    <location>
        <begin position="134"/>
        <end position="1423"/>
    </location>
</feature>
<feature type="mutagenesis site" description="Abrogates phosphatase activity." evidence="6">
    <original>C</original>
    <variation>S</variation>
    <location>
        <position position="392"/>
    </location>
</feature>
<feature type="sequence conflict" description="In Ref. 2; BAE33137." evidence="9" ref="2">
    <location>
        <position position="133"/>
    </location>
</feature>
<feature type="sequence conflict" description="In Ref. 2; BAE41593." evidence="9" ref="2">
    <original>N</original>
    <variation>D</variation>
    <location>
        <position position="325"/>
    </location>
</feature>
<sequence>MALVTVQRSPTPSTTSSPCASEADSGEEECRSQPRSISESFLTVKGAALFLPRGNGSSTPRVSHRRNKHAGDLQQHLQAMFILLRPEDNIRLAVRLESTYQNRTRYMVVVSTNGRQDTEESIVLGMDFSSNDSSTCTMGLVLPLWSDTLIHLDGDGGFSVSTDNRVHIFKPVSVQAMWSALQSLHKACEVARMHNYYPGSLFLTWVSYYESHINSDQSSVNEWNAMQDVQSHRPDSPALFTDIPTERERTERLIKTKLREIMMQKDLENITSKEIRTELEMQMVCNLREFKEFIDNEMIVILGQMDSPTQIFEHVFLGSEWNASNLEDLQNRGVRYILNVTREIDNFFPGVFEYHNIRVYDEEATDLLAYWNDTYKFISKAKKHGSKCLVHCKMGVSRSASTVIAYAMKEYGWNLDRAYDYVKERRTVTKPNPSFMRQLEEYQGILLASKQRHNKLWRSHSDSDLSDHHEPICKPGLELNKKEMTTSADQIAEVKTVENLAAMPTVFMEHVVPQDANQKGLHTKERVICLEFSSQEFRAGQIEDELNLNDINGCSSGCCLSESKLPLDNCHASKALLQPGQAPDIANKFPDLAVEDLETDALKADMNVHLLPMEELTSRLKDLPMSPDLESPSPQASCQAAISDFSTDRIDFFSALEKFVELSQETRSRSFSHSRIEELGGGRSEGCRLSVIEVAASEMAADDQRSSSLSNTPHASEESSVDEDQSKAITELVSPDIIMQSHSENAISVKEIVTEIESISQGVGQVQLKGDILSNPCHTPKKSTIHELPLERVPAPESKPGHWEQDESFCSVQPELARDSGKCAPEEGCLTTHSSTADLEEEEPVEGEHDWGPGMHSGAKWCPGSVRRATLEFEERLRQEQENHGTASAGPTLSNRKNSKNDSSVADLMPKWKSDETTPEHSFFLKEAEPSKGKGKCSGSEAGSLSHCERNPTMPDCELLEHHSLPAPQDCLGSDSRSKKQEGDLKKQRAVVPNQECDTQAILLPLPKKIEIIEYTPTVTSLGHTEPGGEATPSKEGEKQGLRKVKMEQSITMFCALDENLNRTLEPSQVSLHPQVLPLPHSSSECDRPADPNPMLSSPQDKGDCPSTPFKTAAPFVSCSTQGASFSLDYLLPHSVVHLEGCTEQSSATDNELSPEQASWEDSRGHFLSSGSGMAHTSSPLTNEDLSLINKLGDSVGVLQKKLDPSPEACRIPHSSSSENIRDLSHSRGVVKEHAKEIESRVIFQAGFSKTSQMKRSASLAKLGYLDLCKDYLPDRELVSSESPHLKLLQPFLRTDSGMHALMAHEPSESAGAQQNPQPTKYSVEQLKTSECIVQSKPVERPSVQYAKEFGYSQQCLLPKARPELTSSEGGLPLLQTQGLQYTGPSPGLAVAPRQQHGRTHPLRRLKRANDKKRTTNPFYNTM</sequence>
<accession>Q5SW75</accession>
<accession>B9EJ94</accession>
<accession>Q3TDK8</accession>
<accession>Q3TYP8</accession>
<accession>Q3U2K3</accession>
<accession>Q5F268</accession>
<accession>Q5SW74</accession>
<accession>Q69ZC3</accession>
<accession>Q76I78</accession>
<keyword id="KW-0009">Actin-binding</keyword>
<keyword id="KW-0025">Alternative splicing</keyword>
<keyword id="KW-0965">Cell junction</keyword>
<keyword id="KW-0963">Cytoplasm</keyword>
<keyword id="KW-0968">Cytoplasmic vesicle</keyword>
<keyword id="KW-0206">Cytoskeleton</keyword>
<keyword id="KW-0221">Differentiation</keyword>
<keyword id="KW-0378">Hydrolase</keyword>
<keyword id="KW-0597">Phosphoprotein</keyword>
<keyword id="KW-0904">Protein phosphatase</keyword>
<keyword id="KW-1185">Reference proteome</keyword>
<keyword id="KW-0744">Spermatogenesis</keyword>
<organism>
    <name type="scientific">Mus musculus</name>
    <name type="common">Mouse</name>
    <dbReference type="NCBI Taxonomy" id="10090"/>
    <lineage>
        <taxon>Eukaryota</taxon>
        <taxon>Metazoa</taxon>
        <taxon>Chordata</taxon>
        <taxon>Craniata</taxon>
        <taxon>Vertebrata</taxon>
        <taxon>Euteleostomi</taxon>
        <taxon>Mammalia</taxon>
        <taxon>Eutheria</taxon>
        <taxon>Euarchontoglires</taxon>
        <taxon>Glires</taxon>
        <taxon>Rodentia</taxon>
        <taxon>Myomorpha</taxon>
        <taxon>Muroidea</taxon>
        <taxon>Muridae</taxon>
        <taxon>Murinae</taxon>
        <taxon>Mus</taxon>
        <taxon>Mus</taxon>
    </lineage>
</organism>
<protein>
    <recommendedName>
        <fullName>Protein phosphatase Slingshot homolog 2</fullName>
        <ecNumber>3.1.3.16</ecNumber>
        <ecNumber>3.1.3.48</ecNumber>
    </recommendedName>
    <alternativeName>
        <fullName>SSH-like protein 2</fullName>
        <shortName>SSH-2L</shortName>
        <shortName>mSSH-2L</shortName>
    </alternativeName>
</protein>